<comment type="function">
    <text evidence="1">Binds 16S rRNA, required for the assembly of 30S particles and may also be responsible for determining the conformation of the 16S rRNA at the A site.</text>
</comment>
<comment type="cofactor">
    <cofactor evidence="1">
        <name>Zn(2+)</name>
        <dbReference type="ChEBI" id="CHEBI:29105"/>
    </cofactor>
    <text evidence="1">Binds 1 zinc ion per subunit.</text>
</comment>
<comment type="subunit">
    <text evidence="1">Part of the 30S ribosomal subunit. Contacts proteins S3 and S10.</text>
</comment>
<comment type="similarity">
    <text evidence="1">Belongs to the universal ribosomal protein uS14 family. Zinc-binding uS14 subfamily.</text>
</comment>
<name>RS14Z_LEPBJ</name>
<gene>
    <name evidence="1" type="primary">rpsZ</name>
    <name evidence="1" type="synonym">rpsN</name>
    <name type="ordered locus">LBJ_2646</name>
</gene>
<organism>
    <name type="scientific">Leptospira borgpetersenii serovar Hardjo-bovis (strain JB197)</name>
    <dbReference type="NCBI Taxonomy" id="355277"/>
    <lineage>
        <taxon>Bacteria</taxon>
        <taxon>Pseudomonadati</taxon>
        <taxon>Spirochaetota</taxon>
        <taxon>Spirochaetia</taxon>
        <taxon>Leptospirales</taxon>
        <taxon>Leptospiraceae</taxon>
        <taxon>Leptospira</taxon>
    </lineage>
</organism>
<dbReference type="EMBL" id="CP000350">
    <property type="protein sequence ID" value="ABJ77069.1"/>
    <property type="molecule type" value="Genomic_DNA"/>
</dbReference>
<dbReference type="RefSeq" id="WP_002153498.1">
    <property type="nucleotide sequence ID" value="NC_008510.1"/>
</dbReference>
<dbReference type="SMR" id="Q04PV1"/>
<dbReference type="KEGG" id="lbj:LBJ_2646"/>
<dbReference type="HOGENOM" id="CLU_139869_3_0_12"/>
<dbReference type="Proteomes" id="UP000000656">
    <property type="component" value="Chromosome 1"/>
</dbReference>
<dbReference type="GO" id="GO:0005737">
    <property type="term" value="C:cytoplasm"/>
    <property type="evidence" value="ECO:0007669"/>
    <property type="project" value="UniProtKB-ARBA"/>
</dbReference>
<dbReference type="GO" id="GO:0015935">
    <property type="term" value="C:small ribosomal subunit"/>
    <property type="evidence" value="ECO:0007669"/>
    <property type="project" value="TreeGrafter"/>
</dbReference>
<dbReference type="GO" id="GO:0019843">
    <property type="term" value="F:rRNA binding"/>
    <property type="evidence" value="ECO:0007669"/>
    <property type="project" value="UniProtKB-UniRule"/>
</dbReference>
<dbReference type="GO" id="GO:0003735">
    <property type="term" value="F:structural constituent of ribosome"/>
    <property type="evidence" value="ECO:0007669"/>
    <property type="project" value="InterPro"/>
</dbReference>
<dbReference type="GO" id="GO:0008270">
    <property type="term" value="F:zinc ion binding"/>
    <property type="evidence" value="ECO:0007669"/>
    <property type="project" value="UniProtKB-UniRule"/>
</dbReference>
<dbReference type="GO" id="GO:0006412">
    <property type="term" value="P:translation"/>
    <property type="evidence" value="ECO:0007669"/>
    <property type="project" value="UniProtKB-UniRule"/>
</dbReference>
<dbReference type="FunFam" id="4.10.830.10:FF:000001">
    <property type="entry name" value="30S ribosomal protein S14 type Z"/>
    <property type="match status" value="1"/>
</dbReference>
<dbReference type="Gene3D" id="4.10.830.10">
    <property type="entry name" value="30s Ribosomal Protein S14, Chain N"/>
    <property type="match status" value="1"/>
</dbReference>
<dbReference type="HAMAP" id="MF_01364_B">
    <property type="entry name" value="Ribosomal_uS14_2_B"/>
    <property type="match status" value="1"/>
</dbReference>
<dbReference type="InterPro" id="IPR001209">
    <property type="entry name" value="Ribosomal_uS14"/>
</dbReference>
<dbReference type="InterPro" id="IPR023053">
    <property type="entry name" value="Ribosomal_uS14_bact"/>
</dbReference>
<dbReference type="InterPro" id="IPR018271">
    <property type="entry name" value="Ribosomal_uS14_CS"/>
</dbReference>
<dbReference type="InterPro" id="IPR043140">
    <property type="entry name" value="Ribosomal_uS14_sf"/>
</dbReference>
<dbReference type="NCBIfam" id="NF005974">
    <property type="entry name" value="PRK08061.1"/>
    <property type="match status" value="1"/>
</dbReference>
<dbReference type="PANTHER" id="PTHR19836">
    <property type="entry name" value="30S RIBOSOMAL PROTEIN S14"/>
    <property type="match status" value="1"/>
</dbReference>
<dbReference type="PANTHER" id="PTHR19836:SF19">
    <property type="entry name" value="SMALL RIBOSOMAL SUBUNIT PROTEIN US14M"/>
    <property type="match status" value="1"/>
</dbReference>
<dbReference type="Pfam" id="PF00253">
    <property type="entry name" value="Ribosomal_S14"/>
    <property type="match status" value="1"/>
</dbReference>
<dbReference type="SUPFAM" id="SSF57716">
    <property type="entry name" value="Glucocorticoid receptor-like (DNA-binding domain)"/>
    <property type="match status" value="1"/>
</dbReference>
<dbReference type="PROSITE" id="PS00527">
    <property type="entry name" value="RIBOSOMAL_S14"/>
    <property type="match status" value="1"/>
</dbReference>
<sequence length="61" mass="7208">MAKTSITVRHQRKKKFEVREYNRCPICGRSRGYLRRFDMCRICFRKLASGAQIPGVVKSSW</sequence>
<keyword id="KW-0479">Metal-binding</keyword>
<keyword id="KW-0687">Ribonucleoprotein</keyword>
<keyword id="KW-0689">Ribosomal protein</keyword>
<keyword id="KW-0694">RNA-binding</keyword>
<keyword id="KW-0699">rRNA-binding</keyword>
<keyword id="KW-0862">Zinc</keyword>
<accession>Q04PV1</accession>
<protein>
    <recommendedName>
        <fullName evidence="1">Small ribosomal subunit protein uS14</fullName>
    </recommendedName>
    <alternativeName>
        <fullName evidence="2">30S ribosomal protein S14 type Z</fullName>
    </alternativeName>
</protein>
<evidence type="ECO:0000255" key="1">
    <source>
        <dbReference type="HAMAP-Rule" id="MF_01364"/>
    </source>
</evidence>
<evidence type="ECO:0000305" key="2"/>
<proteinExistence type="inferred from homology"/>
<feature type="chain" id="PRO_1000067948" description="Small ribosomal subunit protein uS14">
    <location>
        <begin position="1"/>
        <end position="61"/>
    </location>
</feature>
<feature type="binding site" evidence="1">
    <location>
        <position position="24"/>
    </location>
    <ligand>
        <name>Zn(2+)</name>
        <dbReference type="ChEBI" id="CHEBI:29105"/>
    </ligand>
</feature>
<feature type="binding site" evidence="1">
    <location>
        <position position="27"/>
    </location>
    <ligand>
        <name>Zn(2+)</name>
        <dbReference type="ChEBI" id="CHEBI:29105"/>
    </ligand>
</feature>
<feature type="binding site" evidence="1">
    <location>
        <position position="40"/>
    </location>
    <ligand>
        <name>Zn(2+)</name>
        <dbReference type="ChEBI" id="CHEBI:29105"/>
    </ligand>
</feature>
<feature type="binding site" evidence="1">
    <location>
        <position position="43"/>
    </location>
    <ligand>
        <name>Zn(2+)</name>
        <dbReference type="ChEBI" id="CHEBI:29105"/>
    </ligand>
</feature>
<reference key="1">
    <citation type="journal article" date="2006" name="Proc. Natl. Acad. Sci. U.S.A.">
        <title>Genome reduction in Leptospira borgpetersenii reflects limited transmission potential.</title>
        <authorList>
            <person name="Bulach D.M."/>
            <person name="Zuerner R.L."/>
            <person name="Wilson P."/>
            <person name="Seemann T."/>
            <person name="McGrath A."/>
            <person name="Cullen P.A."/>
            <person name="Davis J."/>
            <person name="Johnson M."/>
            <person name="Kuczek E."/>
            <person name="Alt D.P."/>
            <person name="Peterson-Burch B."/>
            <person name="Coppel R.L."/>
            <person name="Rood J.I."/>
            <person name="Davies J.K."/>
            <person name="Adler B."/>
        </authorList>
    </citation>
    <scope>NUCLEOTIDE SEQUENCE [LARGE SCALE GENOMIC DNA]</scope>
    <source>
        <strain>JB197</strain>
    </source>
</reference>